<protein>
    <recommendedName>
        <fullName evidence="1">Glycine dehydrogenase (decarboxylating)</fullName>
        <ecNumber evidence="1">1.4.4.2</ecNumber>
    </recommendedName>
    <alternativeName>
        <fullName evidence="1">Glycine cleavage system P-protein</fullName>
    </alternativeName>
    <alternativeName>
        <fullName evidence="1">Glycine decarboxylase</fullName>
    </alternativeName>
    <alternativeName>
        <fullName evidence="1">Glycine dehydrogenase (aminomethyl-transferring)</fullName>
    </alternativeName>
</protein>
<accession>P62920</accession>
<accession>Q578K9</accession>
<accession>Q93MS6</accession>
<comment type="function">
    <text evidence="1">The glycine cleavage system catalyzes the degradation of glycine. The P protein binds the alpha-amino group of glycine through its pyridoxal phosphate cofactor; CO(2) is released and the remaining methylamine moiety is then transferred to the lipoamide cofactor of the H protein.</text>
</comment>
<comment type="catalytic activity">
    <reaction evidence="1">
        <text>N(6)-[(R)-lipoyl]-L-lysyl-[glycine-cleavage complex H protein] + glycine + H(+) = N(6)-[(R)-S(8)-aminomethyldihydrolipoyl]-L-lysyl-[glycine-cleavage complex H protein] + CO2</text>
        <dbReference type="Rhea" id="RHEA:24304"/>
        <dbReference type="Rhea" id="RHEA-COMP:10494"/>
        <dbReference type="Rhea" id="RHEA-COMP:10495"/>
        <dbReference type="ChEBI" id="CHEBI:15378"/>
        <dbReference type="ChEBI" id="CHEBI:16526"/>
        <dbReference type="ChEBI" id="CHEBI:57305"/>
        <dbReference type="ChEBI" id="CHEBI:83099"/>
        <dbReference type="ChEBI" id="CHEBI:83143"/>
        <dbReference type="EC" id="1.4.4.2"/>
    </reaction>
</comment>
<comment type="cofactor">
    <cofactor evidence="1">
        <name>pyridoxal 5'-phosphate</name>
        <dbReference type="ChEBI" id="CHEBI:597326"/>
    </cofactor>
</comment>
<comment type="subunit">
    <text evidence="1">The glycine cleavage system is composed of four proteins: P, T, L and H.</text>
</comment>
<comment type="similarity">
    <text evidence="1">Belongs to the GcvP family.</text>
</comment>
<organism>
    <name type="scientific">Brucella abortus biovar 1 (strain 9-941)</name>
    <dbReference type="NCBI Taxonomy" id="262698"/>
    <lineage>
        <taxon>Bacteria</taxon>
        <taxon>Pseudomonadati</taxon>
        <taxon>Pseudomonadota</taxon>
        <taxon>Alphaproteobacteria</taxon>
        <taxon>Hyphomicrobiales</taxon>
        <taxon>Brucellaceae</taxon>
        <taxon>Brucella/Ochrobactrum group</taxon>
        <taxon>Brucella</taxon>
    </lineage>
</organism>
<name>GCSP_BRUAB</name>
<feature type="chain" id="PRO_0000166908" description="Glycine dehydrogenase (decarboxylating)">
    <location>
        <begin position="1"/>
        <end position="932"/>
    </location>
</feature>
<feature type="modified residue" description="N6-(pyridoxal phosphate)lysine" evidence="1">
    <location>
        <position position="685"/>
    </location>
</feature>
<feature type="sequence conflict" description="In Ref. 1; AAK73853." evidence="2" ref="1">
    <original>P</original>
    <variation>S</variation>
    <location>
        <position position="42"/>
    </location>
</feature>
<feature type="sequence conflict" description="In Ref. 1; AAK73853." evidence="2" ref="1">
    <original>P</original>
    <variation>L</variation>
    <location>
        <position position="433"/>
    </location>
</feature>
<feature type="sequence conflict" description="In Ref. 1; AAK73853." evidence="2" ref="1">
    <original>T</original>
    <variation>A</variation>
    <location>
        <position position="930"/>
    </location>
</feature>
<evidence type="ECO:0000255" key="1">
    <source>
        <dbReference type="HAMAP-Rule" id="MF_00711"/>
    </source>
</evidence>
<evidence type="ECO:0000305" key="2"/>
<dbReference type="EC" id="1.4.4.2" evidence="1"/>
<dbReference type="EMBL" id="AH010948">
    <property type="protein sequence ID" value="AAK73853.1"/>
    <property type="molecule type" value="Genomic_DNA"/>
</dbReference>
<dbReference type="EMBL" id="AE017224">
    <property type="protein sequence ID" value="AAX75925.1"/>
    <property type="molecule type" value="Genomic_DNA"/>
</dbReference>
<dbReference type="RefSeq" id="WP_002967268.1">
    <property type="nucleotide sequence ID" value="NC_006933.1"/>
</dbReference>
<dbReference type="SMR" id="P62920"/>
<dbReference type="EnsemblBacteria" id="AAX75925">
    <property type="protein sequence ID" value="AAX75925"/>
    <property type="gene ID" value="BruAb2_0506"/>
</dbReference>
<dbReference type="GeneID" id="93015578"/>
<dbReference type="KEGG" id="bmb:BruAb2_0506"/>
<dbReference type="HOGENOM" id="CLU_004620_2_1_5"/>
<dbReference type="PRO" id="PR:P62920"/>
<dbReference type="Proteomes" id="UP000000540">
    <property type="component" value="Chromosome II"/>
</dbReference>
<dbReference type="GO" id="GO:0005829">
    <property type="term" value="C:cytosol"/>
    <property type="evidence" value="ECO:0007669"/>
    <property type="project" value="TreeGrafter"/>
</dbReference>
<dbReference type="GO" id="GO:0005960">
    <property type="term" value="C:glycine cleavage complex"/>
    <property type="evidence" value="ECO:0007669"/>
    <property type="project" value="TreeGrafter"/>
</dbReference>
<dbReference type="GO" id="GO:0016594">
    <property type="term" value="F:glycine binding"/>
    <property type="evidence" value="ECO:0007669"/>
    <property type="project" value="TreeGrafter"/>
</dbReference>
<dbReference type="GO" id="GO:0004375">
    <property type="term" value="F:glycine dehydrogenase (decarboxylating) activity"/>
    <property type="evidence" value="ECO:0007669"/>
    <property type="project" value="UniProtKB-EC"/>
</dbReference>
<dbReference type="GO" id="GO:0030170">
    <property type="term" value="F:pyridoxal phosphate binding"/>
    <property type="evidence" value="ECO:0007669"/>
    <property type="project" value="TreeGrafter"/>
</dbReference>
<dbReference type="GO" id="GO:0019464">
    <property type="term" value="P:glycine decarboxylation via glycine cleavage system"/>
    <property type="evidence" value="ECO:0007669"/>
    <property type="project" value="UniProtKB-UniRule"/>
</dbReference>
<dbReference type="CDD" id="cd00613">
    <property type="entry name" value="GDC-P"/>
    <property type="match status" value="2"/>
</dbReference>
<dbReference type="FunFam" id="3.90.1150.10:FF:000007">
    <property type="entry name" value="Glycine dehydrogenase (decarboxylating), mitochondrial"/>
    <property type="match status" value="1"/>
</dbReference>
<dbReference type="FunFam" id="3.40.640.10:FF:000007">
    <property type="entry name" value="glycine dehydrogenase (Decarboxylating), mitochondrial"/>
    <property type="match status" value="1"/>
</dbReference>
<dbReference type="Gene3D" id="3.90.1150.10">
    <property type="entry name" value="Aspartate Aminotransferase, domain 1"/>
    <property type="match status" value="2"/>
</dbReference>
<dbReference type="Gene3D" id="3.40.640.10">
    <property type="entry name" value="Type I PLP-dependent aspartate aminotransferase-like (Major domain)"/>
    <property type="match status" value="2"/>
</dbReference>
<dbReference type="HAMAP" id="MF_00711">
    <property type="entry name" value="GcvP"/>
    <property type="match status" value="1"/>
</dbReference>
<dbReference type="InterPro" id="IPR003437">
    <property type="entry name" value="GcvP"/>
</dbReference>
<dbReference type="InterPro" id="IPR049316">
    <property type="entry name" value="GDC-P_C"/>
</dbReference>
<dbReference type="InterPro" id="IPR049315">
    <property type="entry name" value="GDC-P_N"/>
</dbReference>
<dbReference type="InterPro" id="IPR020581">
    <property type="entry name" value="GDC_P"/>
</dbReference>
<dbReference type="InterPro" id="IPR015424">
    <property type="entry name" value="PyrdxlP-dep_Trfase"/>
</dbReference>
<dbReference type="InterPro" id="IPR015421">
    <property type="entry name" value="PyrdxlP-dep_Trfase_major"/>
</dbReference>
<dbReference type="InterPro" id="IPR015422">
    <property type="entry name" value="PyrdxlP-dep_Trfase_small"/>
</dbReference>
<dbReference type="NCBIfam" id="TIGR00461">
    <property type="entry name" value="gcvP"/>
    <property type="match status" value="1"/>
</dbReference>
<dbReference type="NCBIfam" id="NF003346">
    <property type="entry name" value="PRK04366.1"/>
    <property type="match status" value="1"/>
</dbReference>
<dbReference type="PANTHER" id="PTHR11773:SF1">
    <property type="entry name" value="GLYCINE DEHYDROGENASE (DECARBOXYLATING), MITOCHONDRIAL"/>
    <property type="match status" value="1"/>
</dbReference>
<dbReference type="PANTHER" id="PTHR11773">
    <property type="entry name" value="GLYCINE DEHYDROGENASE, DECARBOXYLATING"/>
    <property type="match status" value="1"/>
</dbReference>
<dbReference type="Pfam" id="PF21478">
    <property type="entry name" value="GcvP2_C"/>
    <property type="match status" value="1"/>
</dbReference>
<dbReference type="Pfam" id="PF02347">
    <property type="entry name" value="GDC-P"/>
    <property type="match status" value="2"/>
</dbReference>
<dbReference type="SUPFAM" id="SSF53383">
    <property type="entry name" value="PLP-dependent transferases"/>
    <property type="match status" value="2"/>
</dbReference>
<reference key="1">
    <citation type="journal article" date="2000" name="Infect. Immun.">
        <title>Identification of genes required for chronic persistence of Brucella abortus in mice.</title>
        <authorList>
            <person name="Hong P.C."/>
            <person name="Tsolis R.M."/>
            <person name="Ficht T.A."/>
        </authorList>
    </citation>
    <scope>NUCLEOTIDE SEQUENCE [GENOMIC DNA]</scope>
</reference>
<reference key="2">
    <citation type="journal article" date="2005" name="J. Bacteriol.">
        <title>Completion of the genome sequence of Brucella abortus and comparison to the highly similar genomes of Brucella melitensis and Brucella suis.</title>
        <authorList>
            <person name="Halling S.M."/>
            <person name="Peterson-Burch B.D."/>
            <person name="Bricker B.J."/>
            <person name="Zuerner R.L."/>
            <person name="Qing Z."/>
            <person name="Li L.-L."/>
            <person name="Kapur V."/>
            <person name="Alt D.P."/>
            <person name="Olsen S.C."/>
        </authorList>
    </citation>
    <scope>NUCLEOTIDE SEQUENCE [LARGE SCALE GENOMIC DNA]</scope>
    <source>
        <strain>9-941</strain>
    </source>
</reference>
<sequence>MTEFLPFVARHIGPRHEDERAMLAALGLPSMETLITQAVPAPIRLNRALNLPAALSEADALAELGTIMGRNVVKKSFIGAGYHGVHTPPVIQRNLFENPAWYTAYTPYQSEISQGRLELLFHFQTLVAELTGLPVACASLLDEATAVAEAIGVACRHHRDKRSRILLAGELHPQTVDVVNTRAEPLGWEIATGSDVDDNTAAIVVPWPDTRGVYGDFAKVIADAKAKGALVIAVADPLALTIMEAPARWGADMAVGSMQRYGVPMGFGGPHAAYLAVSEALTRIIPGRIVGQSVDAHGRAAYRLALQTREQHIRRDKATSNICTAQALLANMAAAFAIWHGPAGLQAIATRVAALAARFAAALKAAGVEIAGESLFDTVTAKVPGKAAAIAAEADKGGRLIRIIDADTVGVTFDETSTEEDLTALASLFGAKPVGGDTVLVPGKERGEGFLTQEVFHSHRSETEMMRFLRRLADKDLALDRAMIPLGSCTMKLNAAAEMMPVSWNTVANLHPFAPAEQVQGYAKMTSDLEAWLCEITGFAGVSLQPNAGSQGEYAGLMAIRHYHQARGQGHRNICLIPSSAHGTNPASASMAGMSVVVVNCRPDGDIDIDDLKAKAEKHRDNLAAFMITYPSTYGVFEEGIKAFCEIVHDNGGQVYFDGANLNALVGLARPADIGADVCHMNLHKTFCIPHGGGGPGVGPIGVAKHLVPYLPGHVEAGSEHAVAAAQFGSASILVITWMYIRMMGGAGLKKATEAAILNANYIAHRLKGVYPILYTGAHDRVAHECIVDTRVLKDSAGITVEDVAKRLIDYGFHAPTMSWPVAGTLMIEPTESEPKLEIDRLCDAMIAIAGEAKKVADGVWPADDNPLANAPHTASDTLATEWKHPYTREEAVFPGGAFDPTAKYWPPVSRVDNVGGDRNLICSCPPVATYG</sequence>
<proteinExistence type="inferred from homology"/>
<keyword id="KW-0560">Oxidoreductase</keyword>
<keyword id="KW-0663">Pyridoxal phosphate</keyword>
<gene>
    <name evidence="1" type="primary">gcvP</name>
    <name type="ordered locus">BruAb2_0506</name>
</gene>